<reference key="1">
    <citation type="journal article" date="1998" name="DNA Res.">
        <title>Structural analysis of Arabidopsis thaliana chromosome 5. V. Sequence features of the regions of 1,381,565 bp covered by twenty one physically assigned P1 and TAC clones.</title>
        <authorList>
            <person name="Kaneko T."/>
            <person name="Kotani H."/>
            <person name="Nakamura Y."/>
            <person name="Sato S."/>
            <person name="Asamizu E."/>
            <person name="Miyajima N."/>
            <person name="Tabata S."/>
        </authorList>
    </citation>
    <scope>NUCLEOTIDE SEQUENCE [LARGE SCALE GENOMIC DNA]</scope>
    <source>
        <strain>cv. Columbia</strain>
    </source>
</reference>
<reference key="2">
    <citation type="journal article" date="2017" name="Plant J.">
        <title>Araport11: a complete reannotation of the Arabidopsis thaliana reference genome.</title>
        <authorList>
            <person name="Cheng C.Y."/>
            <person name="Krishnakumar V."/>
            <person name="Chan A.P."/>
            <person name="Thibaud-Nissen F."/>
            <person name="Schobel S."/>
            <person name="Town C.D."/>
        </authorList>
    </citation>
    <scope>GENOME REANNOTATION</scope>
    <source>
        <strain>cv. Columbia</strain>
    </source>
</reference>
<reference key="3">
    <citation type="submission" date="2004-09" db="EMBL/GenBank/DDBJ databases">
        <title>Large-scale analysis of RIKEN Arabidopsis full-length (RAFL) cDNAs.</title>
        <authorList>
            <person name="Totoki Y."/>
            <person name="Seki M."/>
            <person name="Ishida J."/>
            <person name="Nakajima M."/>
            <person name="Enju A."/>
            <person name="Kamiya A."/>
            <person name="Narusaka M."/>
            <person name="Shin-i T."/>
            <person name="Nakagawa M."/>
            <person name="Sakamoto N."/>
            <person name="Oishi K."/>
            <person name="Kohara Y."/>
            <person name="Kobayashi M."/>
            <person name="Toyoda A."/>
            <person name="Sakaki Y."/>
            <person name="Sakurai T."/>
            <person name="Iida K."/>
            <person name="Akiyama K."/>
            <person name="Satou M."/>
            <person name="Toyoda T."/>
            <person name="Konagaya A."/>
            <person name="Carninci P."/>
            <person name="Kawai J."/>
            <person name="Hayashizaki Y."/>
            <person name="Shinozaki K."/>
        </authorList>
    </citation>
    <scope>NUCLEOTIDE SEQUENCE [LARGE SCALE MRNA]</scope>
    <source>
        <strain>cv. Columbia</strain>
    </source>
</reference>
<reference key="4">
    <citation type="submission" date="2003-10" db="EMBL/GenBank/DDBJ databases">
        <title>Arabidopsis ORF clones.</title>
        <authorList>
            <person name="Cheuk R.F."/>
            <person name="Chen H."/>
            <person name="Kim C.J."/>
            <person name="Shinn P."/>
            <person name="Carninci P."/>
            <person name="Hayashizaki Y."/>
            <person name="Ishida J."/>
            <person name="Kamiya A."/>
            <person name="Kawai J."/>
            <person name="Narusaka M."/>
            <person name="Sakurai T."/>
            <person name="Satou M."/>
            <person name="Seki M."/>
            <person name="Shinozaki K."/>
            <person name="Ecker J.R."/>
        </authorList>
    </citation>
    <scope>NUCLEOTIDE SEQUENCE [LARGE SCALE MRNA] OF 27-147</scope>
    <source>
        <strain>cv. Columbia</strain>
    </source>
</reference>
<reference key="5">
    <citation type="journal article" date="2009" name="Plant Mol. Biol.">
        <title>Stress induced and nuclear localized HIPP26 from Arabidopsis thaliana interacts via its heavy metal associated domain with the drought stress related zinc finger transcription factor ATHB29.</title>
        <authorList>
            <person name="Barth O."/>
            <person name="Vogt S."/>
            <person name="Uhlemann R."/>
            <person name="Zschiesche W."/>
            <person name="Humbeck K."/>
        </authorList>
    </citation>
    <scope>INTERACTION WITH ZHD11/HB29</scope>
    <source>
        <strain>cv. Columbia</strain>
    </source>
</reference>
<reference key="6">
    <citation type="journal article" date="2010" name="Metallomics">
        <title>Metallochaperone-like genes in Arabidopsis thaliana.</title>
        <authorList>
            <person name="Tehseen M."/>
            <person name="Cairns N."/>
            <person name="Sherson S."/>
            <person name="Cobbett C.S."/>
        </authorList>
    </citation>
    <scope>NOMENCLATURE</scope>
    <scope>GENE FAMILY</scope>
</reference>
<reference key="7">
    <citation type="journal article" date="2013" name="FEBS J.">
        <title>Heavy metal-associated isoprenylated plant protein (HIPP): characterization of a family of proteins exclusive to plants.</title>
        <authorList>
            <person name="de Abreu-Neto J.B."/>
            <person name="Turchetto-Zolet A.C."/>
            <person name="de Oliveira L.F."/>
            <person name="Zanettini M.H."/>
            <person name="Margis-Pinheiro M."/>
        </authorList>
    </citation>
    <scope>GENE FAMILY</scope>
    <scope>NOMENCLATURE</scope>
</reference>
<reference key="8">
    <citation type="journal article" date="2013" name="Plant Signal. Behav.">
        <title>UBIQUITIN-SPECIFIC PROTEASE16 interacts with a HEAVY METAL ASSOCIATED ISOPRENYLATED PLANT PROTEIN27 and modulates cadmium tolerance.</title>
        <authorList>
            <person name="Zhao J."/>
            <person name="Zhou H."/>
            <person name="Li Y."/>
        </authorList>
    </citation>
    <scope>INTERACTION WITH UBP16</scope>
</reference>
<protein>
    <recommendedName>
        <fullName evidence="6 7">Heavy metal-associated isoprenylated plant protein 27</fullName>
        <shortName evidence="7">AtHIP27</shortName>
        <shortName evidence="6 7">AtHIPP27</shortName>
    </recommendedName>
</protein>
<keyword id="KW-0104">Cadmium</keyword>
<keyword id="KW-0449">Lipoprotein</keyword>
<keyword id="KW-0472">Membrane</keyword>
<keyword id="KW-0479">Metal-binding</keyword>
<keyword id="KW-0488">Methylation</keyword>
<keyword id="KW-0636">Prenylation</keyword>
<keyword id="KW-1185">Reference proteome</keyword>
<organism>
    <name type="scientific">Arabidopsis thaliana</name>
    <name type="common">Mouse-ear cress</name>
    <dbReference type="NCBI Taxonomy" id="3702"/>
    <lineage>
        <taxon>Eukaryota</taxon>
        <taxon>Viridiplantae</taxon>
        <taxon>Streptophyta</taxon>
        <taxon>Embryophyta</taxon>
        <taxon>Tracheophyta</taxon>
        <taxon>Spermatophyta</taxon>
        <taxon>Magnoliopsida</taxon>
        <taxon>eudicotyledons</taxon>
        <taxon>Gunneridae</taxon>
        <taxon>Pentapetalae</taxon>
        <taxon>rosids</taxon>
        <taxon>malvids</taxon>
        <taxon>Brassicales</taxon>
        <taxon>Brassicaceae</taxon>
        <taxon>Camelineae</taxon>
        <taxon>Arabidopsis</taxon>
    </lineage>
</organism>
<proteinExistence type="evidence at protein level"/>
<accession>Q67ZW1</accession>
<accession>Q9FKX1</accession>
<comment type="function">
    <text evidence="1">Heavy-metal-binding protein. Binds cadmium. May be involved in cadmium transport and play a role in cadmium detoxification.</text>
</comment>
<comment type="subunit">
    <text evidence="4 5">Interacts with UBP16 (PubMed:23857362). Interacts with ZHD11/HB29 (PubMed:18974936).</text>
</comment>
<comment type="subcellular location">
    <subcellularLocation>
        <location evidence="2">Membrane</location>
    </subcellularLocation>
</comment>
<comment type="similarity">
    <text evidence="8">Belongs to the HIPP family.</text>
</comment>
<comment type="sequence caution" evidence="8">
    <conflict type="erroneous gene model prediction">
        <sequence resource="EMBL-CDS" id="BAB10416"/>
    </conflict>
</comment>
<gene>
    <name evidence="6 7" type="primary">HIPP27</name>
    <name evidence="9" type="ordered locus">At5g66110</name>
    <name evidence="10" type="ORF">K2A18.19</name>
</gene>
<dbReference type="EMBL" id="AB011474">
    <property type="protein sequence ID" value="BAB10416.1"/>
    <property type="status" value="ALT_SEQ"/>
    <property type="molecule type" value="Genomic_DNA"/>
</dbReference>
<dbReference type="EMBL" id="CP002688">
    <property type="protein sequence ID" value="AED98160.1"/>
    <property type="molecule type" value="Genomic_DNA"/>
</dbReference>
<dbReference type="EMBL" id="CP002688">
    <property type="protein sequence ID" value="ANM70586.1"/>
    <property type="molecule type" value="Genomic_DNA"/>
</dbReference>
<dbReference type="EMBL" id="AK175898">
    <property type="protein sequence ID" value="BAD43661.1"/>
    <property type="molecule type" value="mRNA"/>
</dbReference>
<dbReference type="EMBL" id="AK176006">
    <property type="protein sequence ID" value="BAD43769.1"/>
    <property type="molecule type" value="mRNA"/>
</dbReference>
<dbReference type="EMBL" id="BT010626">
    <property type="protein sequence ID" value="AAQ89648.1"/>
    <property type="molecule type" value="mRNA"/>
</dbReference>
<dbReference type="RefSeq" id="NP_001332182.1">
    <property type="nucleotide sequence ID" value="NM_001345746.1"/>
</dbReference>
<dbReference type="RefSeq" id="NP_001332183.1">
    <property type="nucleotide sequence ID" value="NM_001345747.1"/>
</dbReference>
<dbReference type="RefSeq" id="NP_201412.2">
    <property type="nucleotide sequence ID" value="NM_126009.3"/>
</dbReference>
<dbReference type="SMR" id="Q67ZW1"/>
<dbReference type="FunCoup" id="Q67ZW1">
    <property type="interactions" value="40"/>
</dbReference>
<dbReference type="IntAct" id="Q67ZW1">
    <property type="interactions" value="4"/>
</dbReference>
<dbReference type="STRING" id="3702.Q67ZW1"/>
<dbReference type="iPTMnet" id="Q67ZW1"/>
<dbReference type="PaxDb" id="3702-AT5G66110.1"/>
<dbReference type="ProteomicsDB" id="230345"/>
<dbReference type="DNASU" id="836743"/>
<dbReference type="EnsemblPlants" id="AT5G66110.1">
    <property type="protein sequence ID" value="AT5G66110.1"/>
    <property type="gene ID" value="AT5G66110"/>
</dbReference>
<dbReference type="EnsemblPlants" id="AT5G66110.3">
    <property type="protein sequence ID" value="AT5G66110.3"/>
    <property type="gene ID" value="AT5G66110"/>
</dbReference>
<dbReference type="GeneID" id="836743"/>
<dbReference type="Gramene" id="AT5G66110.1">
    <property type="protein sequence ID" value="AT5G66110.1"/>
    <property type="gene ID" value="AT5G66110"/>
</dbReference>
<dbReference type="Gramene" id="AT5G66110.3">
    <property type="protein sequence ID" value="AT5G66110.3"/>
    <property type="gene ID" value="AT5G66110"/>
</dbReference>
<dbReference type="KEGG" id="ath:AT5G66110"/>
<dbReference type="Araport" id="AT5G66110"/>
<dbReference type="TAIR" id="AT5G66110">
    <property type="gene designation" value="HIPP27"/>
</dbReference>
<dbReference type="eggNOG" id="KOG1603">
    <property type="taxonomic scope" value="Eukaryota"/>
</dbReference>
<dbReference type="HOGENOM" id="CLU_100095_1_0_1"/>
<dbReference type="InParanoid" id="Q67ZW1"/>
<dbReference type="OMA" id="SELCEFH"/>
<dbReference type="OrthoDB" id="666972at2759"/>
<dbReference type="PhylomeDB" id="Q67ZW1"/>
<dbReference type="PRO" id="PR:Q67ZW1"/>
<dbReference type="Proteomes" id="UP000006548">
    <property type="component" value="Chromosome 5"/>
</dbReference>
<dbReference type="ExpressionAtlas" id="Q67ZW1">
    <property type="expression patterns" value="baseline and differential"/>
</dbReference>
<dbReference type="GO" id="GO:0005886">
    <property type="term" value="C:plasma membrane"/>
    <property type="evidence" value="ECO:0007005"/>
    <property type="project" value="TAIR"/>
</dbReference>
<dbReference type="GO" id="GO:0046872">
    <property type="term" value="F:metal ion binding"/>
    <property type="evidence" value="ECO:0007669"/>
    <property type="project" value="UniProtKB-KW"/>
</dbReference>
<dbReference type="CDD" id="cd00371">
    <property type="entry name" value="HMA"/>
    <property type="match status" value="1"/>
</dbReference>
<dbReference type="FunFam" id="3.30.70.100:FF:000035">
    <property type="entry name" value="Heavy metal-associated isoprenylated plant protein 26"/>
    <property type="match status" value="1"/>
</dbReference>
<dbReference type="Gene3D" id="3.30.70.100">
    <property type="match status" value="1"/>
</dbReference>
<dbReference type="InterPro" id="IPR006121">
    <property type="entry name" value="HMA_dom"/>
</dbReference>
<dbReference type="InterPro" id="IPR036163">
    <property type="entry name" value="HMA_dom_sf"/>
</dbReference>
<dbReference type="PANTHER" id="PTHR22814">
    <property type="entry name" value="COPPER TRANSPORT PROTEIN ATOX1-RELATED"/>
    <property type="match status" value="1"/>
</dbReference>
<dbReference type="PANTHER" id="PTHR22814:SF294">
    <property type="entry name" value="HEAVY METAL-ASSOCIATED ISOPRENYLATED PLANT PROTEIN 27"/>
    <property type="match status" value="1"/>
</dbReference>
<dbReference type="Pfam" id="PF00403">
    <property type="entry name" value="HMA"/>
    <property type="match status" value="1"/>
</dbReference>
<dbReference type="SUPFAM" id="SSF55008">
    <property type="entry name" value="HMA, heavy metal-associated domain"/>
    <property type="match status" value="1"/>
</dbReference>
<dbReference type="PROSITE" id="PS50846">
    <property type="entry name" value="HMA_2"/>
    <property type="match status" value="1"/>
</dbReference>
<sequence length="147" mass="16651">MGFRDICYRKHHKKLKQFQKVEIKVKMDCEGCERRVRKSVEGMKGVSKVTVDPKQSKLTVEGFVQPSKVVHRVMHRTGKKAELWPYVPYEVVPHPYAPGAYDKKAPPGYVRNALADPLVAPLARASSFEVKYTSAFSDDNPNACTIM</sequence>
<name>HIP27_ARATH</name>
<evidence type="ECO:0000250" key="1">
    <source>
        <dbReference type="UniProtKB" id="Q9C9A3"/>
    </source>
</evidence>
<evidence type="ECO:0000250" key="2">
    <source>
        <dbReference type="UniProtKB" id="Q9SZN7"/>
    </source>
</evidence>
<evidence type="ECO:0000255" key="3">
    <source>
        <dbReference type="PROSITE-ProRule" id="PRU00280"/>
    </source>
</evidence>
<evidence type="ECO:0000269" key="4">
    <source>
    </source>
</evidence>
<evidence type="ECO:0000269" key="5">
    <source>
    </source>
</evidence>
<evidence type="ECO:0000303" key="6">
    <source>
    </source>
</evidence>
<evidence type="ECO:0000303" key="7">
    <source>
    </source>
</evidence>
<evidence type="ECO:0000305" key="8"/>
<evidence type="ECO:0000312" key="9">
    <source>
        <dbReference type="Araport" id="AT5G66110"/>
    </source>
</evidence>
<evidence type="ECO:0000312" key="10">
    <source>
        <dbReference type="EMBL" id="BAB10416.1"/>
    </source>
</evidence>
<feature type="chain" id="PRO_0000435863" description="Heavy metal-associated isoprenylated plant protein 27">
    <location>
        <begin position="1"/>
        <end position="144"/>
    </location>
</feature>
<feature type="propeptide" id="PRO_0000435864" description="Removed in mature form" evidence="8">
    <location>
        <begin position="145"/>
        <end position="147"/>
    </location>
</feature>
<feature type="domain" description="HMA" evidence="3">
    <location>
        <begin position="18"/>
        <end position="82"/>
    </location>
</feature>
<feature type="binding site" evidence="3">
    <location>
        <position position="29"/>
    </location>
    <ligand>
        <name>a metal cation</name>
        <dbReference type="ChEBI" id="CHEBI:25213"/>
    </ligand>
</feature>
<feature type="binding site" evidence="3">
    <location>
        <position position="32"/>
    </location>
    <ligand>
        <name>a metal cation</name>
        <dbReference type="ChEBI" id="CHEBI:25213"/>
    </ligand>
</feature>
<feature type="modified residue" description="Cysteine methyl ester" evidence="2">
    <location>
        <position position="144"/>
    </location>
</feature>
<feature type="lipid moiety-binding region" description="S-farnesyl cysteine" evidence="2">
    <location>
        <position position="144"/>
    </location>
</feature>